<accession>C0LGG9</accession>
<accession>Q9LPG0</accession>
<comment type="catalytic activity">
    <reaction>
        <text>L-seryl-[protein] + ATP = O-phospho-L-seryl-[protein] + ADP + H(+)</text>
        <dbReference type="Rhea" id="RHEA:17989"/>
        <dbReference type="Rhea" id="RHEA-COMP:9863"/>
        <dbReference type="Rhea" id="RHEA-COMP:11604"/>
        <dbReference type="ChEBI" id="CHEBI:15378"/>
        <dbReference type="ChEBI" id="CHEBI:29999"/>
        <dbReference type="ChEBI" id="CHEBI:30616"/>
        <dbReference type="ChEBI" id="CHEBI:83421"/>
        <dbReference type="ChEBI" id="CHEBI:456216"/>
        <dbReference type="EC" id="2.7.11.1"/>
    </reaction>
</comment>
<comment type="catalytic activity">
    <reaction>
        <text>L-threonyl-[protein] + ATP = O-phospho-L-threonyl-[protein] + ADP + H(+)</text>
        <dbReference type="Rhea" id="RHEA:46608"/>
        <dbReference type="Rhea" id="RHEA-COMP:11060"/>
        <dbReference type="Rhea" id="RHEA-COMP:11605"/>
        <dbReference type="ChEBI" id="CHEBI:15378"/>
        <dbReference type="ChEBI" id="CHEBI:30013"/>
        <dbReference type="ChEBI" id="CHEBI:30616"/>
        <dbReference type="ChEBI" id="CHEBI:61977"/>
        <dbReference type="ChEBI" id="CHEBI:456216"/>
        <dbReference type="EC" id="2.7.11.1"/>
    </reaction>
</comment>
<comment type="subcellular location">
    <subcellularLocation>
        <location evidence="1">Cell membrane</location>
        <topology evidence="1">Single-pass type I membrane protein</topology>
    </subcellularLocation>
</comment>
<comment type="alternative products">
    <event type="alternative splicing"/>
    <isoform>
        <id>C0LGG9-1</id>
        <name>1</name>
        <sequence type="displayed"/>
    </isoform>
    <isoform>
        <id>C0LGG9-2</id>
        <name>2</name>
        <sequence type="described" ref="VSP_038279"/>
    </isoform>
</comment>
<comment type="similarity">
    <text evidence="4">Belongs to the protein kinase superfamily. Ser/Thr protein kinase family.</text>
</comment>
<comment type="sequence caution" evidence="8">
    <conflict type="erroneous gene model prediction">
        <sequence resource="EMBL-CDS" id="AAF78445"/>
    </conflict>
</comment>
<feature type="signal peptide" evidence="3">
    <location>
        <begin position="1"/>
        <end position="26"/>
    </location>
</feature>
<feature type="chain" id="PRO_0000387532" description="Probable LRR receptor-like serine/threonine-protein kinase At1g53440">
    <location>
        <begin position="27"/>
        <end position="1035"/>
    </location>
</feature>
<feature type="topological domain" description="Extracellular" evidence="3">
    <location>
        <begin position="27"/>
        <end position="607"/>
    </location>
</feature>
<feature type="transmembrane region" description="Helical" evidence="3">
    <location>
        <begin position="608"/>
        <end position="628"/>
    </location>
</feature>
<feature type="topological domain" description="Cytoplasmic" evidence="3">
    <location>
        <begin position="629"/>
        <end position="1035"/>
    </location>
</feature>
<feature type="repeat" description="LRR 1">
    <location>
        <begin position="87"/>
        <end position="110"/>
    </location>
</feature>
<feature type="repeat" description="LRR 2">
    <location>
        <begin position="111"/>
        <end position="135"/>
    </location>
</feature>
<feature type="repeat" description="LRR 3">
    <location>
        <begin position="137"/>
        <end position="158"/>
    </location>
</feature>
<feature type="repeat" description="LRR 4">
    <location>
        <begin position="160"/>
        <end position="182"/>
    </location>
</feature>
<feature type="repeat" description="LRR 5">
    <location>
        <begin position="183"/>
        <end position="206"/>
    </location>
</feature>
<feature type="repeat" description="LRR 6">
    <location>
        <begin position="208"/>
        <end position="232"/>
    </location>
</feature>
<feature type="repeat" description="LRR 7">
    <location>
        <begin position="234"/>
        <end position="254"/>
    </location>
</feature>
<feature type="repeat" description="LRR 8">
    <location>
        <begin position="278"/>
        <end position="302"/>
    </location>
</feature>
<feature type="repeat" description="LRR 9">
    <location>
        <begin position="303"/>
        <end position="326"/>
    </location>
</feature>
<feature type="repeat" description="LRR 10">
    <location>
        <begin position="328"/>
        <end position="349"/>
    </location>
</feature>
<feature type="repeat" description="LRR 11">
    <location>
        <begin position="350"/>
        <end position="372"/>
    </location>
</feature>
<feature type="domain" description="Protein kinase" evidence="4">
    <location>
        <begin position="667"/>
        <end position="948"/>
    </location>
</feature>
<feature type="region of interest" description="Disordered" evidence="6">
    <location>
        <begin position="969"/>
        <end position="1035"/>
    </location>
</feature>
<feature type="compositionally biased region" description="Polar residues" evidence="6">
    <location>
        <begin position="972"/>
        <end position="981"/>
    </location>
</feature>
<feature type="compositionally biased region" description="Low complexity" evidence="6">
    <location>
        <begin position="1009"/>
        <end position="1023"/>
    </location>
</feature>
<feature type="active site" description="Proton acceptor" evidence="4 5">
    <location>
        <position position="793"/>
    </location>
</feature>
<feature type="binding site" evidence="4">
    <location>
        <begin position="673"/>
        <end position="681"/>
    </location>
    <ligand>
        <name>ATP</name>
        <dbReference type="ChEBI" id="CHEBI:30616"/>
    </ligand>
</feature>
<feature type="binding site" evidence="4">
    <location>
        <position position="695"/>
    </location>
    <ligand>
        <name>ATP</name>
        <dbReference type="ChEBI" id="CHEBI:30616"/>
    </ligand>
</feature>
<feature type="modified residue" description="Phosphothreonine" evidence="2">
    <location>
        <position position="656"/>
    </location>
</feature>
<feature type="modified residue" description="Phosphotyrosine" evidence="2">
    <location>
        <position position="740"/>
    </location>
</feature>
<feature type="modified residue" description="Phosphoserine" evidence="2">
    <location>
        <position position="826"/>
    </location>
</feature>
<feature type="modified residue" description="Phosphothreonine" evidence="2">
    <location>
        <position position="827"/>
    </location>
</feature>
<feature type="modified residue" description="Phosphothreonine" evidence="2">
    <location>
        <position position="832"/>
    </location>
</feature>
<feature type="modified residue" description="Phosphotyrosine" evidence="2">
    <location>
        <position position="840"/>
    </location>
</feature>
<feature type="glycosylation site" description="N-linked (GlcNAc...) asparagine" evidence="3">
    <location>
        <position position="46"/>
    </location>
</feature>
<feature type="glycosylation site" description="N-linked (GlcNAc...) asparagine" evidence="3">
    <location>
        <position position="75"/>
    </location>
</feature>
<feature type="glycosylation site" description="N-linked (GlcNAc...) asparagine" evidence="3">
    <location>
        <position position="83"/>
    </location>
</feature>
<feature type="glycosylation site" description="N-linked (GlcNAc...) asparagine" evidence="3">
    <location>
        <position position="110"/>
    </location>
</feature>
<feature type="glycosylation site" description="N-linked (GlcNAc...) asparagine" evidence="3">
    <location>
        <position position="194"/>
    </location>
</feature>
<feature type="glycosylation site" description="N-linked (GlcNAc...) asparagine" evidence="3">
    <location>
        <position position="208"/>
    </location>
</feature>
<feature type="glycosylation site" description="N-linked (GlcNAc...) asparagine" evidence="3">
    <location>
        <position position="229"/>
    </location>
</feature>
<feature type="glycosylation site" description="N-linked (GlcNAc...) asparagine" evidence="3">
    <location>
        <position position="256"/>
    </location>
</feature>
<feature type="glycosylation site" description="N-linked (GlcNAc...) asparagine" evidence="3">
    <location>
        <position position="277"/>
    </location>
</feature>
<feature type="glycosylation site" description="N-linked (GlcNAc...) asparagine" evidence="3">
    <location>
        <position position="317"/>
    </location>
</feature>
<feature type="glycosylation site" description="N-linked (GlcNAc...) asparagine" evidence="3">
    <location>
        <position position="337"/>
    </location>
</feature>
<feature type="glycosylation site" description="N-linked (GlcNAc...) asparagine" evidence="3">
    <location>
        <position position="361"/>
    </location>
</feature>
<feature type="glycosylation site" description="N-linked (GlcNAc...) asparagine" evidence="3">
    <location>
        <position position="386"/>
    </location>
</feature>
<feature type="glycosylation site" description="N-linked (GlcNAc...) asparagine" evidence="3">
    <location>
        <position position="469"/>
    </location>
</feature>
<feature type="glycosylation site" description="N-linked (GlcNAc...) asparagine" evidence="3">
    <location>
        <position position="559"/>
    </location>
</feature>
<feature type="splice variant" id="VSP_038279" description="In isoform 2." evidence="7">
    <location>
        <begin position="1"/>
        <end position="165"/>
    </location>
</feature>
<sequence>MGFFFSTRKGLLLIIFICLDIFGSNAQLLPEDEVQTLRTIFRKLQNQTVNIERTSCLDRKWNFVAESTSKLPTSNITCDCTFNASSVCRVTNIQLRGFNLRGIIPPEFGNLTRLTEIDLVLNFLSGTIPTTLSQIPLEILAVTGNRLSGPFPPQLGQITTLTDVIMESNLFTGQLPPNLGNLRSLKRLLISSNNITGRIPESLSNLKNLTNFRIDGNSLSGKIPDFIGNWTRLVRLDLQGTSMEGPIPASISNLKNLTELRITDLRGPTSPFPDLQNMTNMERLVLRNCLIREPIPEYIGTSMTMLKLLDLSSNMLNGTIPDTFRSLNAFNFMYLNNNSLTGPVPQFILDSKQNIDLSYNNFTQPPTLSCNQLDVNLISSYPSVTNNSVQWCLRKDLPCPGDAHHSSLFINCGGNRLKVDKDEYADDLNKRGASTFSSVSERWGYSSSGAWLGNDGATYLATDTFNLINESTPEYYKTARLASQSLKYYGLCMRRGSYKVQLYFAEIMFSNDQTYSSLGRRLFDIYVQGILLERDFNIAQRAGGVGKPFLRQVDEVQVNGSTLEIHLKWTGKGTNVIPTRGVYGPLISAITVTPNFKVDTGKPLSNGVVAGIVIAACVAFGLLVLVILRLTGYLGGKEVDENEELRGLDLQTGSFTLKQIKRATNNFDPENKIGEGGFGPVYKGVLADGMTIAVKQLSSKSKQGNREFVTEIGMISALQHPNLVKLYGCCIEGKELLLVYEYLENNSLARALFGTEKQRLHLDWSTRNKVCIGIAKGLAYLHEESRLKIVHRDIKATNVLLDLSLNAKISDFGLAKLDEEENTHISTRIAGTIGYMAPEYAMRGYLTDKADVYSFGVVCLEIVSGKSNTNYRPKEEFIYLLDWAYVLQEQGSLLELVDPDLGTSFSKKEAMRMLNIALLCTNPSPTLRPPMSSVVSMLQGKIKVQPPLVKREADPSGSAAMRFKALEHLSQDSESQVSTYTRNKEHKSSSSMDGPWVDSSFSDPSKDVSLLQQEEGNSSSSSRRLLDDLTDVEIE</sequence>
<gene>
    <name type="ordered locus">At1g53440</name>
    <name type="ORF">T3F20.24</name>
</gene>
<proteinExistence type="evidence at transcript level"/>
<keyword id="KW-0025">Alternative splicing</keyword>
<keyword id="KW-0067">ATP-binding</keyword>
<keyword id="KW-1003">Cell membrane</keyword>
<keyword id="KW-0325">Glycoprotein</keyword>
<keyword id="KW-0418">Kinase</keyword>
<keyword id="KW-0433">Leucine-rich repeat</keyword>
<keyword id="KW-0472">Membrane</keyword>
<keyword id="KW-0547">Nucleotide-binding</keyword>
<keyword id="KW-0597">Phosphoprotein</keyword>
<keyword id="KW-0675">Receptor</keyword>
<keyword id="KW-1185">Reference proteome</keyword>
<keyword id="KW-0677">Repeat</keyword>
<keyword id="KW-0723">Serine/threonine-protein kinase</keyword>
<keyword id="KW-0732">Signal</keyword>
<keyword id="KW-0808">Transferase</keyword>
<keyword id="KW-0812">Transmembrane</keyword>
<keyword id="KW-1133">Transmembrane helix</keyword>
<organism>
    <name type="scientific">Arabidopsis thaliana</name>
    <name type="common">Mouse-ear cress</name>
    <dbReference type="NCBI Taxonomy" id="3702"/>
    <lineage>
        <taxon>Eukaryota</taxon>
        <taxon>Viridiplantae</taxon>
        <taxon>Streptophyta</taxon>
        <taxon>Embryophyta</taxon>
        <taxon>Tracheophyta</taxon>
        <taxon>Spermatophyta</taxon>
        <taxon>Magnoliopsida</taxon>
        <taxon>eudicotyledons</taxon>
        <taxon>Gunneridae</taxon>
        <taxon>Pentapetalae</taxon>
        <taxon>rosids</taxon>
        <taxon>malvids</taxon>
        <taxon>Brassicales</taxon>
        <taxon>Brassicaceae</taxon>
        <taxon>Camelineae</taxon>
        <taxon>Arabidopsis</taxon>
    </lineage>
</organism>
<dbReference type="EC" id="2.7.11.1"/>
<dbReference type="EMBL" id="AC018748">
    <property type="protein sequence ID" value="AAF78445.1"/>
    <property type="status" value="ALT_SEQ"/>
    <property type="molecule type" value="Genomic_DNA"/>
</dbReference>
<dbReference type="EMBL" id="CP002684">
    <property type="protein sequence ID" value="AEE32941.1"/>
    <property type="molecule type" value="Genomic_DNA"/>
</dbReference>
<dbReference type="EMBL" id="FJ708658">
    <property type="protein sequence ID" value="ACN59254.1"/>
    <property type="molecule type" value="mRNA"/>
</dbReference>
<dbReference type="PIR" id="D96574">
    <property type="entry name" value="D96574"/>
</dbReference>
<dbReference type="RefSeq" id="NP_175749.1">
    <molecule id="C0LGG9-1"/>
    <property type="nucleotide sequence ID" value="NM_104222.2"/>
</dbReference>
<dbReference type="SMR" id="C0LGG9"/>
<dbReference type="BioGRID" id="27004">
    <property type="interactions" value="13"/>
</dbReference>
<dbReference type="FunCoup" id="C0LGG9">
    <property type="interactions" value="516"/>
</dbReference>
<dbReference type="IntAct" id="C0LGG9">
    <property type="interactions" value="11"/>
</dbReference>
<dbReference type="STRING" id="3702.C0LGG9"/>
<dbReference type="GlyGen" id="C0LGG9">
    <property type="glycosylation" value="16 sites"/>
</dbReference>
<dbReference type="iPTMnet" id="C0LGG9"/>
<dbReference type="PaxDb" id="3702-AT1G53440.1"/>
<dbReference type="ProteomicsDB" id="243017">
    <molecule id="C0LGG9-1"/>
</dbReference>
<dbReference type="EnsemblPlants" id="AT1G53440.1">
    <molecule id="C0LGG9-1"/>
    <property type="protein sequence ID" value="AT1G53440.1"/>
    <property type="gene ID" value="AT1G53440"/>
</dbReference>
<dbReference type="GeneID" id="841779"/>
<dbReference type="Gramene" id="AT1G53440.1">
    <molecule id="C0LGG9-1"/>
    <property type="protein sequence ID" value="AT1G53440.1"/>
    <property type="gene ID" value="AT1G53440"/>
</dbReference>
<dbReference type="KEGG" id="ath:AT1G53440"/>
<dbReference type="Araport" id="AT1G53440"/>
<dbReference type="TAIR" id="AT1G53440"/>
<dbReference type="eggNOG" id="ENOG502QTCP">
    <property type="taxonomic scope" value="Eukaryota"/>
</dbReference>
<dbReference type="HOGENOM" id="CLU_000288_114_2_1"/>
<dbReference type="InParanoid" id="C0LGG9"/>
<dbReference type="OMA" id="YIGEMKS"/>
<dbReference type="PhylomeDB" id="C0LGG9"/>
<dbReference type="PRO" id="PR:C0LGG9"/>
<dbReference type="Proteomes" id="UP000006548">
    <property type="component" value="Chromosome 1"/>
</dbReference>
<dbReference type="ExpressionAtlas" id="C0LGG9">
    <property type="expression patterns" value="baseline and differential"/>
</dbReference>
<dbReference type="GO" id="GO:0005886">
    <property type="term" value="C:plasma membrane"/>
    <property type="evidence" value="ECO:0007005"/>
    <property type="project" value="TAIR"/>
</dbReference>
<dbReference type="GO" id="GO:0005524">
    <property type="term" value="F:ATP binding"/>
    <property type="evidence" value="ECO:0007669"/>
    <property type="project" value="UniProtKB-KW"/>
</dbReference>
<dbReference type="GO" id="GO:0106310">
    <property type="term" value="F:protein serine kinase activity"/>
    <property type="evidence" value="ECO:0007669"/>
    <property type="project" value="RHEA"/>
</dbReference>
<dbReference type="GO" id="GO:0004674">
    <property type="term" value="F:protein serine/threonine kinase activity"/>
    <property type="evidence" value="ECO:0007669"/>
    <property type="project" value="UniProtKB-KW"/>
</dbReference>
<dbReference type="CDD" id="cd14066">
    <property type="entry name" value="STKc_IRAK"/>
    <property type="match status" value="1"/>
</dbReference>
<dbReference type="FunFam" id="3.30.200.20:FF:000217">
    <property type="entry name" value="probable LRR receptor-like serine/threonine-protein kinase At1g53430"/>
    <property type="match status" value="1"/>
</dbReference>
<dbReference type="FunFam" id="3.80.10.10:FF:000838">
    <property type="entry name" value="Probable LRR receptor-like serine/threonine-protein kinase At1g53440"/>
    <property type="match status" value="1"/>
</dbReference>
<dbReference type="FunFam" id="3.80.10.10:FF:000916">
    <property type="entry name" value="Probable LRR receptor-like serine/threonine-protein kinase At1g53440"/>
    <property type="match status" value="1"/>
</dbReference>
<dbReference type="FunFam" id="2.60.120.430:FF:000004">
    <property type="entry name" value="Putative leucine-rich repeat receptor-like serine/threonine-protein kinase"/>
    <property type="match status" value="1"/>
</dbReference>
<dbReference type="FunFam" id="1.10.510.10:FF:000044">
    <property type="entry name" value="Putative LRR receptor-like serine/threonine-protein kinase"/>
    <property type="match status" value="1"/>
</dbReference>
<dbReference type="FunFam" id="3.80.10.10:FF:000433">
    <property type="entry name" value="Putative LRR receptor-like serine/threonine-protein kinase isoform A"/>
    <property type="match status" value="1"/>
</dbReference>
<dbReference type="Gene3D" id="2.60.120.430">
    <property type="entry name" value="Galactose-binding lectin"/>
    <property type="match status" value="1"/>
</dbReference>
<dbReference type="Gene3D" id="3.30.200.20">
    <property type="entry name" value="Phosphorylase Kinase, domain 1"/>
    <property type="match status" value="1"/>
</dbReference>
<dbReference type="Gene3D" id="3.80.10.10">
    <property type="entry name" value="Ribonuclease Inhibitor"/>
    <property type="match status" value="3"/>
</dbReference>
<dbReference type="Gene3D" id="1.10.510.10">
    <property type="entry name" value="Transferase(Phosphotransferase) domain 1"/>
    <property type="match status" value="1"/>
</dbReference>
<dbReference type="InterPro" id="IPR011009">
    <property type="entry name" value="Kinase-like_dom_sf"/>
</dbReference>
<dbReference type="InterPro" id="IPR001611">
    <property type="entry name" value="Leu-rich_rpt"/>
</dbReference>
<dbReference type="InterPro" id="IPR032675">
    <property type="entry name" value="LRR_dom_sf"/>
</dbReference>
<dbReference type="InterPro" id="IPR051824">
    <property type="entry name" value="LRR_Rcpt-Like_S/T_Kinase"/>
</dbReference>
<dbReference type="InterPro" id="IPR021720">
    <property type="entry name" value="Malectin_dom"/>
</dbReference>
<dbReference type="InterPro" id="IPR000719">
    <property type="entry name" value="Prot_kinase_dom"/>
</dbReference>
<dbReference type="InterPro" id="IPR001245">
    <property type="entry name" value="Ser-Thr/Tyr_kinase_cat_dom"/>
</dbReference>
<dbReference type="InterPro" id="IPR008271">
    <property type="entry name" value="Ser/Thr_kinase_AS"/>
</dbReference>
<dbReference type="PANTHER" id="PTHR48006">
    <property type="entry name" value="LEUCINE-RICH REPEAT-CONTAINING PROTEIN DDB_G0281931-RELATED"/>
    <property type="match status" value="1"/>
</dbReference>
<dbReference type="PANTHER" id="PTHR48006:SF60">
    <property type="entry name" value="PROTEIN KINASE DOMAIN-CONTAINING PROTEIN"/>
    <property type="match status" value="1"/>
</dbReference>
<dbReference type="Pfam" id="PF00560">
    <property type="entry name" value="LRR_1"/>
    <property type="match status" value="3"/>
</dbReference>
<dbReference type="Pfam" id="PF11721">
    <property type="entry name" value="Malectin"/>
    <property type="match status" value="1"/>
</dbReference>
<dbReference type="Pfam" id="PF07714">
    <property type="entry name" value="PK_Tyr_Ser-Thr"/>
    <property type="match status" value="1"/>
</dbReference>
<dbReference type="SMART" id="SM00220">
    <property type="entry name" value="S_TKc"/>
    <property type="match status" value="1"/>
</dbReference>
<dbReference type="SUPFAM" id="SSF52058">
    <property type="entry name" value="L domain-like"/>
    <property type="match status" value="1"/>
</dbReference>
<dbReference type="SUPFAM" id="SSF56112">
    <property type="entry name" value="Protein kinase-like (PK-like)"/>
    <property type="match status" value="1"/>
</dbReference>
<dbReference type="PROSITE" id="PS50011">
    <property type="entry name" value="PROTEIN_KINASE_DOM"/>
    <property type="match status" value="1"/>
</dbReference>
<dbReference type="PROSITE" id="PS00108">
    <property type="entry name" value="PROTEIN_KINASE_ST"/>
    <property type="match status" value="1"/>
</dbReference>
<evidence type="ECO:0000250" key="1"/>
<evidence type="ECO:0000250" key="2">
    <source>
        <dbReference type="UniProtKB" id="O48814"/>
    </source>
</evidence>
<evidence type="ECO:0000255" key="3"/>
<evidence type="ECO:0000255" key="4">
    <source>
        <dbReference type="PROSITE-ProRule" id="PRU00159"/>
    </source>
</evidence>
<evidence type="ECO:0000255" key="5">
    <source>
        <dbReference type="PROSITE-ProRule" id="PRU10027"/>
    </source>
</evidence>
<evidence type="ECO:0000256" key="6">
    <source>
        <dbReference type="SAM" id="MobiDB-lite"/>
    </source>
</evidence>
<evidence type="ECO:0000303" key="7">
    <source>
    </source>
</evidence>
<evidence type="ECO:0000305" key="8"/>
<name>Y5344_ARATH</name>
<reference key="1">
    <citation type="journal article" date="2000" name="Nature">
        <title>Sequence and analysis of chromosome 1 of the plant Arabidopsis thaliana.</title>
        <authorList>
            <person name="Theologis A."/>
            <person name="Ecker J.R."/>
            <person name="Palm C.J."/>
            <person name="Federspiel N.A."/>
            <person name="Kaul S."/>
            <person name="White O."/>
            <person name="Alonso J."/>
            <person name="Altafi H."/>
            <person name="Araujo R."/>
            <person name="Bowman C.L."/>
            <person name="Brooks S.Y."/>
            <person name="Buehler E."/>
            <person name="Chan A."/>
            <person name="Chao Q."/>
            <person name="Chen H."/>
            <person name="Cheuk R.F."/>
            <person name="Chin C.W."/>
            <person name="Chung M.K."/>
            <person name="Conn L."/>
            <person name="Conway A.B."/>
            <person name="Conway A.R."/>
            <person name="Creasy T.H."/>
            <person name="Dewar K."/>
            <person name="Dunn P."/>
            <person name="Etgu P."/>
            <person name="Feldblyum T.V."/>
            <person name="Feng J.-D."/>
            <person name="Fong B."/>
            <person name="Fujii C.Y."/>
            <person name="Gill J.E."/>
            <person name="Goldsmith A.D."/>
            <person name="Haas B."/>
            <person name="Hansen N.F."/>
            <person name="Hughes B."/>
            <person name="Huizar L."/>
            <person name="Hunter J.L."/>
            <person name="Jenkins J."/>
            <person name="Johnson-Hopson C."/>
            <person name="Khan S."/>
            <person name="Khaykin E."/>
            <person name="Kim C.J."/>
            <person name="Koo H.L."/>
            <person name="Kremenetskaia I."/>
            <person name="Kurtz D.B."/>
            <person name="Kwan A."/>
            <person name="Lam B."/>
            <person name="Langin-Hooper S."/>
            <person name="Lee A."/>
            <person name="Lee J.M."/>
            <person name="Lenz C.A."/>
            <person name="Li J.H."/>
            <person name="Li Y.-P."/>
            <person name="Lin X."/>
            <person name="Liu S.X."/>
            <person name="Liu Z.A."/>
            <person name="Luros J.S."/>
            <person name="Maiti R."/>
            <person name="Marziali A."/>
            <person name="Militscher J."/>
            <person name="Miranda M."/>
            <person name="Nguyen M."/>
            <person name="Nierman W.C."/>
            <person name="Osborne B.I."/>
            <person name="Pai G."/>
            <person name="Peterson J."/>
            <person name="Pham P.K."/>
            <person name="Rizzo M."/>
            <person name="Rooney T."/>
            <person name="Rowley D."/>
            <person name="Sakano H."/>
            <person name="Salzberg S.L."/>
            <person name="Schwartz J.R."/>
            <person name="Shinn P."/>
            <person name="Southwick A.M."/>
            <person name="Sun H."/>
            <person name="Tallon L.J."/>
            <person name="Tambunga G."/>
            <person name="Toriumi M.J."/>
            <person name="Town C.D."/>
            <person name="Utterback T."/>
            <person name="Van Aken S."/>
            <person name="Vaysberg M."/>
            <person name="Vysotskaia V.S."/>
            <person name="Walker M."/>
            <person name="Wu D."/>
            <person name="Yu G."/>
            <person name="Fraser C.M."/>
            <person name="Venter J.C."/>
            <person name="Davis R.W."/>
        </authorList>
    </citation>
    <scope>NUCLEOTIDE SEQUENCE [LARGE SCALE GENOMIC DNA]</scope>
    <source>
        <strain>cv. Columbia</strain>
    </source>
</reference>
<reference key="2">
    <citation type="journal article" date="2017" name="Plant J.">
        <title>Araport11: a complete reannotation of the Arabidopsis thaliana reference genome.</title>
        <authorList>
            <person name="Cheng C.Y."/>
            <person name="Krishnakumar V."/>
            <person name="Chan A.P."/>
            <person name="Thibaud-Nissen F."/>
            <person name="Schobel S."/>
            <person name="Town C.D."/>
        </authorList>
    </citation>
    <scope>GENOME REANNOTATION</scope>
    <source>
        <strain>cv. Columbia</strain>
    </source>
</reference>
<reference key="3">
    <citation type="journal article" date="2010" name="BMC Genomics">
        <title>Genome-wide cloning and sequence analysis of leucine-rich repeat receptor-like protein kinase genes in Arabidopsis thaliana.</title>
        <authorList>
            <person name="Gou X."/>
            <person name="He K."/>
            <person name="Yang H."/>
            <person name="Yuan T."/>
            <person name="Lin H."/>
            <person name="Clouse S.D."/>
            <person name="Li J."/>
        </authorList>
    </citation>
    <scope>NUCLEOTIDE SEQUENCE [LARGE SCALE MRNA] (ISOFORM 2)</scope>
    <source>
        <strain>cv. Columbia</strain>
    </source>
</reference>
<protein>
    <recommendedName>
        <fullName>Probable LRR receptor-like serine/threonine-protein kinase At1g53440</fullName>
        <ecNumber>2.7.11.1</ecNumber>
    </recommendedName>
</protein>